<gene>
    <name type="ORF">v1g245966</name>
</gene>
<comment type="function">
    <text evidence="1">Involved in the early processing steps of the pre-rRNA in the maturation pathway leading to the 18S rRNA.</text>
</comment>
<comment type="subcellular location">
    <subcellularLocation>
        <location evidence="1">Nucleus</location>
        <location evidence="1">Nucleolus</location>
    </subcellularLocation>
</comment>
<comment type="similarity">
    <text evidence="3">Belongs to the RRP36 family.</text>
</comment>
<accession>A7SL20</accession>
<proteinExistence type="inferred from homology"/>
<dbReference type="EMBL" id="DS469694">
    <property type="protein sequence ID" value="EDO35581.1"/>
    <property type="molecule type" value="Genomic_DNA"/>
</dbReference>
<dbReference type="RefSeq" id="XP_001627681.1">
    <property type="nucleotide sequence ID" value="XM_001627631.1"/>
</dbReference>
<dbReference type="STRING" id="45351.A7SL20"/>
<dbReference type="EnsemblMetazoa" id="EDO35581">
    <property type="protein sequence ID" value="EDO35581"/>
    <property type="gene ID" value="NEMVEDRAFT_v1g245966"/>
</dbReference>
<dbReference type="KEGG" id="nve:5507003"/>
<dbReference type="eggNOG" id="KOG3190">
    <property type="taxonomic scope" value="Eukaryota"/>
</dbReference>
<dbReference type="HOGENOM" id="CLU_048802_4_0_1"/>
<dbReference type="InParanoid" id="A7SL20"/>
<dbReference type="OMA" id="ERKEMPW"/>
<dbReference type="OrthoDB" id="448446at2759"/>
<dbReference type="PhylomeDB" id="A7SL20"/>
<dbReference type="Proteomes" id="UP000001593">
    <property type="component" value="Unassembled WGS sequence"/>
</dbReference>
<dbReference type="GO" id="GO:0030686">
    <property type="term" value="C:90S preribosome"/>
    <property type="evidence" value="ECO:0000318"/>
    <property type="project" value="GO_Central"/>
</dbReference>
<dbReference type="GO" id="GO:0005730">
    <property type="term" value="C:nucleolus"/>
    <property type="evidence" value="ECO:0000318"/>
    <property type="project" value="GO_Central"/>
</dbReference>
<dbReference type="GO" id="GO:0000462">
    <property type="term" value="P:maturation of SSU-rRNA from tricistronic rRNA transcript (SSU-rRNA, 5.8S rRNA, LSU-rRNA)"/>
    <property type="evidence" value="ECO:0000318"/>
    <property type="project" value="GO_Central"/>
</dbReference>
<dbReference type="InterPro" id="IPR009292">
    <property type="entry name" value="RRP36"/>
</dbReference>
<dbReference type="PANTHER" id="PTHR21738">
    <property type="entry name" value="RIBOSOMAL RNA PROCESSING PROTEIN 36 HOMOLOG"/>
    <property type="match status" value="1"/>
</dbReference>
<dbReference type="PANTHER" id="PTHR21738:SF0">
    <property type="entry name" value="RIBOSOMAL RNA PROCESSING PROTEIN 36 HOMOLOG"/>
    <property type="match status" value="1"/>
</dbReference>
<dbReference type="Pfam" id="PF06102">
    <property type="entry name" value="RRP36"/>
    <property type="match status" value="1"/>
</dbReference>
<name>RRP36_NEMVE</name>
<reference key="1">
    <citation type="journal article" date="2007" name="Science">
        <title>Sea anemone genome reveals ancestral eumetazoan gene repertoire and genomic organization.</title>
        <authorList>
            <person name="Putnam N.H."/>
            <person name="Srivastava M."/>
            <person name="Hellsten U."/>
            <person name="Dirks B."/>
            <person name="Chapman J."/>
            <person name="Salamov A."/>
            <person name="Terry A."/>
            <person name="Shapiro H."/>
            <person name="Lindquist E."/>
            <person name="Kapitonov V.V."/>
            <person name="Jurka J."/>
            <person name="Genikhovich G."/>
            <person name="Grigoriev I.V."/>
            <person name="Lucas S.M."/>
            <person name="Steele R.E."/>
            <person name="Finnerty J.R."/>
            <person name="Technau U."/>
            <person name="Martindale M.Q."/>
            <person name="Rokhsar D.S."/>
        </authorList>
    </citation>
    <scope>NUCLEOTIDE SEQUENCE [LARGE SCALE GENOMIC DNA]</scope>
    <source>
        <strain>CH2 X CH6</strain>
    </source>
</reference>
<keyword id="KW-0539">Nucleus</keyword>
<keyword id="KW-1185">Reference proteome</keyword>
<keyword id="KW-0690">Ribosome biogenesis</keyword>
<keyword id="KW-0698">rRNA processing</keyword>
<feature type="chain" id="PRO_0000338398" description="Ribosomal RNA processing protein 36 homolog">
    <location>
        <begin position="1"/>
        <end position="247"/>
    </location>
</feature>
<feature type="region of interest" description="Disordered" evidence="2">
    <location>
        <begin position="1"/>
        <end position="29"/>
    </location>
</feature>
<feature type="region of interest" description="Disordered" evidence="2">
    <location>
        <begin position="62"/>
        <end position="89"/>
    </location>
</feature>
<feature type="region of interest" description="Disordered" evidence="2">
    <location>
        <begin position="136"/>
        <end position="188"/>
    </location>
</feature>
<feature type="region of interest" description="Disordered" evidence="2">
    <location>
        <begin position="218"/>
        <end position="247"/>
    </location>
</feature>
<feature type="compositionally biased region" description="Acidic residues" evidence="2">
    <location>
        <begin position="8"/>
        <end position="23"/>
    </location>
</feature>
<feature type="compositionally biased region" description="Basic and acidic residues" evidence="2">
    <location>
        <begin position="136"/>
        <end position="153"/>
    </location>
</feature>
<feature type="compositionally biased region" description="Basic and acidic residues" evidence="2">
    <location>
        <begin position="164"/>
        <end position="174"/>
    </location>
</feature>
<feature type="compositionally biased region" description="Basic residues" evidence="2">
    <location>
        <begin position="218"/>
        <end position="240"/>
    </location>
</feature>
<protein>
    <recommendedName>
        <fullName>Ribosomal RNA processing protein 36 homolog</fullName>
    </recommendedName>
</protein>
<organism>
    <name type="scientific">Nematostella vectensis</name>
    <name type="common">Starlet sea anemone</name>
    <dbReference type="NCBI Taxonomy" id="45351"/>
    <lineage>
        <taxon>Eukaryota</taxon>
        <taxon>Metazoa</taxon>
        <taxon>Cnidaria</taxon>
        <taxon>Anthozoa</taxon>
        <taxon>Hexacorallia</taxon>
        <taxon>Actiniaria</taxon>
        <taxon>Edwardsiidae</taxon>
        <taxon>Nematostella</taxon>
    </lineage>
</organism>
<evidence type="ECO:0000250" key="1"/>
<evidence type="ECO:0000256" key="2">
    <source>
        <dbReference type="SAM" id="MobiDB-lite"/>
    </source>
</evidence>
<evidence type="ECO:0000305" key="3"/>
<sequence>MDNQLSDSSDDESPTDDCSDEGEVEHLKDELSQIPFCELQDLKDKIGSKKYNLAIHGIMEERTQGIPDLETKKKKNKGPQELSSKQRVPKLRKVVQVKKKMGRDPRFDDLSGKFNEDLFRKSYSFVNDIRVEEKKSVEKELKKTKNAEKRKNLNDLLKVMNQQERSRKSAEAKRESKKKIKETERELVQKGKKPFYLRKSELKKLELAEKYKELKSKGKLQKYLTKRRKKTASKDRRHVPERRQVDQ</sequence>